<accession>B1ZWL2</accession>
<comment type="function">
    <text evidence="1">With LigD forms a non-homologous end joining (NHEJ) DNA repair enzyme, which repairs dsDNA breaks with reduced fidelity. Binds linear dsDNA with 5'- and 3'- overhangs but not closed circular dsDNA nor ssDNA. Recruits and stimulates the ligase activity of LigD.</text>
</comment>
<comment type="subunit">
    <text evidence="1">Homodimer. Interacts with LigD.</text>
</comment>
<comment type="similarity">
    <text evidence="1">Belongs to the prokaryotic Ku family.</text>
</comment>
<reference key="1">
    <citation type="journal article" date="2011" name="J. Bacteriol.">
        <title>Genome sequence of the verrucomicrobium Opitutus terrae PB90-1, an abundant inhabitant of rice paddy soil ecosystems.</title>
        <authorList>
            <person name="van Passel M.W."/>
            <person name="Kant R."/>
            <person name="Palva A."/>
            <person name="Copeland A."/>
            <person name="Lucas S."/>
            <person name="Lapidus A."/>
            <person name="Glavina del Rio T."/>
            <person name="Pitluck S."/>
            <person name="Goltsman E."/>
            <person name="Clum A."/>
            <person name="Sun H."/>
            <person name="Schmutz J."/>
            <person name="Larimer F.W."/>
            <person name="Land M.L."/>
            <person name="Hauser L."/>
            <person name="Kyrpides N."/>
            <person name="Mikhailova N."/>
            <person name="Richardson P.P."/>
            <person name="Janssen P.H."/>
            <person name="de Vos W.M."/>
            <person name="Smidt H."/>
        </authorList>
    </citation>
    <scope>NUCLEOTIDE SEQUENCE [LARGE SCALE GENOMIC DNA]</scope>
    <source>
        <strain>DSM 11246 / JCM 15787 / PB90-1</strain>
    </source>
</reference>
<dbReference type="EMBL" id="CP001032">
    <property type="protein sequence ID" value="ACB73336.1"/>
    <property type="molecule type" value="Genomic_DNA"/>
</dbReference>
<dbReference type="RefSeq" id="WP_012372874.1">
    <property type="nucleotide sequence ID" value="NC_010571.1"/>
</dbReference>
<dbReference type="STRING" id="452637.Oter_0045"/>
<dbReference type="KEGG" id="ote:Oter_0045"/>
<dbReference type="eggNOG" id="COG1273">
    <property type="taxonomic scope" value="Bacteria"/>
</dbReference>
<dbReference type="HOGENOM" id="CLU_048975_1_0_0"/>
<dbReference type="OrthoDB" id="9795084at2"/>
<dbReference type="Proteomes" id="UP000007013">
    <property type="component" value="Chromosome"/>
</dbReference>
<dbReference type="GO" id="GO:0003690">
    <property type="term" value="F:double-stranded DNA binding"/>
    <property type="evidence" value="ECO:0007669"/>
    <property type="project" value="UniProtKB-UniRule"/>
</dbReference>
<dbReference type="GO" id="GO:0006310">
    <property type="term" value="P:DNA recombination"/>
    <property type="evidence" value="ECO:0007669"/>
    <property type="project" value="UniProtKB-KW"/>
</dbReference>
<dbReference type="GO" id="GO:0006303">
    <property type="term" value="P:double-strand break repair via nonhomologous end joining"/>
    <property type="evidence" value="ECO:0007669"/>
    <property type="project" value="UniProtKB-UniRule"/>
</dbReference>
<dbReference type="CDD" id="cd00789">
    <property type="entry name" value="KU_like"/>
    <property type="match status" value="1"/>
</dbReference>
<dbReference type="Gene3D" id="2.40.290.10">
    <property type="match status" value="1"/>
</dbReference>
<dbReference type="HAMAP" id="MF_01875">
    <property type="entry name" value="Prokaryotic_Ku"/>
    <property type="match status" value="1"/>
</dbReference>
<dbReference type="InterPro" id="IPR006164">
    <property type="entry name" value="Ku70/Ku80_beta-barrel_dom"/>
</dbReference>
<dbReference type="InterPro" id="IPR009187">
    <property type="entry name" value="Prok_Ku"/>
</dbReference>
<dbReference type="InterPro" id="IPR016194">
    <property type="entry name" value="SPOC-like_C_dom_sf"/>
</dbReference>
<dbReference type="NCBIfam" id="TIGR02772">
    <property type="entry name" value="Ku_bact"/>
    <property type="match status" value="1"/>
</dbReference>
<dbReference type="PANTHER" id="PTHR41251">
    <property type="entry name" value="NON-HOMOLOGOUS END JOINING PROTEIN KU"/>
    <property type="match status" value="1"/>
</dbReference>
<dbReference type="PANTHER" id="PTHR41251:SF1">
    <property type="entry name" value="NON-HOMOLOGOUS END JOINING PROTEIN KU"/>
    <property type="match status" value="1"/>
</dbReference>
<dbReference type="Pfam" id="PF02735">
    <property type="entry name" value="Ku"/>
    <property type="match status" value="1"/>
</dbReference>
<dbReference type="PIRSF" id="PIRSF006493">
    <property type="entry name" value="Prok_Ku"/>
    <property type="match status" value="1"/>
</dbReference>
<dbReference type="SMART" id="SM00559">
    <property type="entry name" value="Ku78"/>
    <property type="match status" value="1"/>
</dbReference>
<dbReference type="SUPFAM" id="SSF100939">
    <property type="entry name" value="SPOC domain-like"/>
    <property type="match status" value="1"/>
</dbReference>
<protein>
    <recommendedName>
        <fullName evidence="1">Non-homologous end joining protein Ku</fullName>
    </recommendedName>
</protein>
<feature type="chain" id="PRO_0000389191" description="Non-homologous end joining protein Ku">
    <location>
        <begin position="1"/>
        <end position="278"/>
    </location>
</feature>
<feature type="domain" description="Ku" evidence="1">
    <location>
        <begin position="9"/>
        <end position="172"/>
    </location>
</feature>
<feature type="region of interest" description="Disordered" evidence="2">
    <location>
        <begin position="255"/>
        <end position="278"/>
    </location>
</feature>
<feature type="compositionally biased region" description="Basic residues" evidence="2">
    <location>
        <begin position="261"/>
        <end position="278"/>
    </location>
</feature>
<gene>
    <name evidence="1" type="primary">ku</name>
    <name type="ordered locus">Oter_0045</name>
</gene>
<evidence type="ECO:0000255" key="1">
    <source>
        <dbReference type="HAMAP-Rule" id="MF_01875"/>
    </source>
</evidence>
<evidence type="ECO:0000256" key="2">
    <source>
        <dbReference type="SAM" id="MobiDB-lite"/>
    </source>
</evidence>
<proteinExistence type="inferred from homology"/>
<keyword id="KW-0227">DNA damage</keyword>
<keyword id="KW-0233">DNA recombination</keyword>
<keyword id="KW-0234">DNA repair</keyword>
<keyword id="KW-0238">DNA-binding</keyword>
<keyword id="KW-1185">Reference proteome</keyword>
<name>KU_OPITP</name>
<organism>
    <name type="scientific">Opitutus terrae (strain DSM 11246 / JCM 15787 / PB90-1)</name>
    <dbReference type="NCBI Taxonomy" id="452637"/>
    <lineage>
        <taxon>Bacteria</taxon>
        <taxon>Pseudomonadati</taxon>
        <taxon>Verrucomicrobiota</taxon>
        <taxon>Opitutia</taxon>
        <taxon>Opitutales</taxon>
        <taxon>Opitutaceae</taxon>
        <taxon>Opitutus</taxon>
    </lineage>
</organism>
<sequence>MRSLWKGSISFGLVNIPVALYPATRSEELKFRLLRSSDLSPVNYKRVAQADGREVPWEQIVKGYEYEKGKFVVLKEDDFKRVDVEATQTVDIMDFVQLDEVNPMYFHKPYYLVPDKGGAPAYTLLHDVLTETKKAGIAKVVIRTRQHLAAVKAQGQALVLEIMHFAQELVDVGELDIPVAKGGAKRRELDMAKALVEQMTETWQPERYTDDYTSALMAMIKEKIESGGKTSGAAPKPRRATNVIDLAAVLQESLNQTGAGAKKKPAKTAKRGKSRKAA</sequence>